<dbReference type="EMBL" id="CP000492">
    <property type="protein sequence ID" value="ABL65355.1"/>
    <property type="molecule type" value="Genomic_DNA"/>
</dbReference>
<dbReference type="RefSeq" id="WP_011745178.1">
    <property type="nucleotide sequence ID" value="NC_008639.1"/>
</dbReference>
<dbReference type="SMR" id="A1BG28"/>
<dbReference type="STRING" id="290317.Cpha266_1324"/>
<dbReference type="KEGG" id="cph:Cpha266_1324"/>
<dbReference type="eggNOG" id="COG1438">
    <property type="taxonomic scope" value="Bacteria"/>
</dbReference>
<dbReference type="HOGENOM" id="CLU_097103_1_1_10"/>
<dbReference type="OrthoDB" id="9807089at2"/>
<dbReference type="UniPathway" id="UPA00068"/>
<dbReference type="Proteomes" id="UP000008701">
    <property type="component" value="Chromosome"/>
</dbReference>
<dbReference type="GO" id="GO:0005737">
    <property type="term" value="C:cytoplasm"/>
    <property type="evidence" value="ECO:0007669"/>
    <property type="project" value="UniProtKB-SubCell"/>
</dbReference>
<dbReference type="GO" id="GO:0034618">
    <property type="term" value="F:arginine binding"/>
    <property type="evidence" value="ECO:0007669"/>
    <property type="project" value="InterPro"/>
</dbReference>
<dbReference type="GO" id="GO:0003677">
    <property type="term" value="F:DNA binding"/>
    <property type="evidence" value="ECO:0007669"/>
    <property type="project" value="UniProtKB-KW"/>
</dbReference>
<dbReference type="GO" id="GO:0003700">
    <property type="term" value="F:DNA-binding transcription factor activity"/>
    <property type="evidence" value="ECO:0007669"/>
    <property type="project" value="UniProtKB-UniRule"/>
</dbReference>
<dbReference type="GO" id="GO:0006526">
    <property type="term" value="P:L-arginine biosynthetic process"/>
    <property type="evidence" value="ECO:0007669"/>
    <property type="project" value="UniProtKB-UniPathway"/>
</dbReference>
<dbReference type="GO" id="GO:0051259">
    <property type="term" value="P:protein complex oligomerization"/>
    <property type="evidence" value="ECO:0007669"/>
    <property type="project" value="InterPro"/>
</dbReference>
<dbReference type="GO" id="GO:1900079">
    <property type="term" value="P:regulation of arginine biosynthetic process"/>
    <property type="evidence" value="ECO:0007669"/>
    <property type="project" value="UniProtKB-UniRule"/>
</dbReference>
<dbReference type="Gene3D" id="3.30.1360.40">
    <property type="match status" value="1"/>
</dbReference>
<dbReference type="Gene3D" id="1.10.10.10">
    <property type="entry name" value="Winged helix-like DNA-binding domain superfamily/Winged helix DNA-binding domain"/>
    <property type="match status" value="1"/>
</dbReference>
<dbReference type="HAMAP" id="MF_00173">
    <property type="entry name" value="Arg_repressor"/>
    <property type="match status" value="1"/>
</dbReference>
<dbReference type="InterPro" id="IPR001669">
    <property type="entry name" value="Arg_repress"/>
</dbReference>
<dbReference type="InterPro" id="IPR020899">
    <property type="entry name" value="Arg_repress_C"/>
</dbReference>
<dbReference type="InterPro" id="IPR036251">
    <property type="entry name" value="Arg_repress_C_sf"/>
</dbReference>
<dbReference type="InterPro" id="IPR020900">
    <property type="entry name" value="Arg_repress_DNA-bd"/>
</dbReference>
<dbReference type="InterPro" id="IPR036388">
    <property type="entry name" value="WH-like_DNA-bd_sf"/>
</dbReference>
<dbReference type="InterPro" id="IPR036390">
    <property type="entry name" value="WH_DNA-bd_sf"/>
</dbReference>
<dbReference type="PANTHER" id="PTHR34471">
    <property type="entry name" value="ARGININE REPRESSOR"/>
    <property type="match status" value="1"/>
</dbReference>
<dbReference type="PANTHER" id="PTHR34471:SF1">
    <property type="entry name" value="ARGININE REPRESSOR"/>
    <property type="match status" value="1"/>
</dbReference>
<dbReference type="Pfam" id="PF01316">
    <property type="entry name" value="Arg_repressor"/>
    <property type="match status" value="1"/>
</dbReference>
<dbReference type="Pfam" id="PF02863">
    <property type="entry name" value="Arg_repressor_C"/>
    <property type="match status" value="1"/>
</dbReference>
<dbReference type="PRINTS" id="PR01467">
    <property type="entry name" value="ARGREPRESSOR"/>
</dbReference>
<dbReference type="SUPFAM" id="SSF55252">
    <property type="entry name" value="C-terminal domain of arginine repressor"/>
    <property type="match status" value="1"/>
</dbReference>
<dbReference type="SUPFAM" id="SSF46785">
    <property type="entry name" value="Winged helix' DNA-binding domain"/>
    <property type="match status" value="1"/>
</dbReference>
<accession>A1BG28</accession>
<comment type="function">
    <text evidence="1">Regulates arginine biosynthesis genes.</text>
</comment>
<comment type="pathway">
    <text>Amino-acid biosynthesis; L-arginine biosynthesis [regulation].</text>
</comment>
<comment type="subcellular location">
    <subcellularLocation>
        <location evidence="1">Cytoplasm</location>
    </subcellularLocation>
</comment>
<comment type="similarity">
    <text evidence="1">Belongs to the ArgR family.</text>
</comment>
<gene>
    <name evidence="1" type="primary">argR</name>
    <name type="ordered locus">Cpha266_1324</name>
</gene>
<name>ARGR_CHLPD</name>
<proteinExistence type="inferred from homology"/>
<organism>
    <name type="scientific">Chlorobium phaeobacteroides (strain DSM 266 / SMG 266 / 2430)</name>
    <dbReference type="NCBI Taxonomy" id="290317"/>
    <lineage>
        <taxon>Bacteria</taxon>
        <taxon>Pseudomonadati</taxon>
        <taxon>Chlorobiota</taxon>
        <taxon>Chlorobiia</taxon>
        <taxon>Chlorobiales</taxon>
        <taxon>Chlorobiaceae</taxon>
        <taxon>Chlorobium/Pelodictyon group</taxon>
        <taxon>Chlorobium</taxon>
    </lineage>
</organism>
<feature type="chain" id="PRO_1000023553" description="Arginine repressor">
    <location>
        <begin position="1"/>
        <end position="149"/>
    </location>
</feature>
<evidence type="ECO:0000255" key="1">
    <source>
        <dbReference type="HAMAP-Rule" id="MF_00173"/>
    </source>
</evidence>
<sequence>MNKQLRQLKVREILCQHDVGNQHDLMRLLNSAGIRVAQATLSRDCNEIGVVRSRDSKGYRLVYSEKNPGWIIKGLVGVEVLSVKANETSIIIRTLPGRAHGVGSFLDELKSPMILGTIAGDDTVLVIPGSIKQISELVSYIKDNLSQNA</sequence>
<protein>
    <recommendedName>
        <fullName evidence="1">Arginine repressor</fullName>
    </recommendedName>
</protein>
<keyword id="KW-0028">Amino-acid biosynthesis</keyword>
<keyword id="KW-0055">Arginine biosynthesis</keyword>
<keyword id="KW-0963">Cytoplasm</keyword>
<keyword id="KW-0238">DNA-binding</keyword>
<keyword id="KW-1185">Reference proteome</keyword>
<keyword id="KW-0678">Repressor</keyword>
<keyword id="KW-0804">Transcription</keyword>
<keyword id="KW-0805">Transcription regulation</keyword>
<reference key="1">
    <citation type="submission" date="2006-12" db="EMBL/GenBank/DDBJ databases">
        <title>Complete sequence of Chlorobium phaeobacteroides DSM 266.</title>
        <authorList>
            <consortium name="US DOE Joint Genome Institute"/>
            <person name="Copeland A."/>
            <person name="Lucas S."/>
            <person name="Lapidus A."/>
            <person name="Barry K."/>
            <person name="Detter J.C."/>
            <person name="Glavina del Rio T."/>
            <person name="Hammon N."/>
            <person name="Israni S."/>
            <person name="Pitluck S."/>
            <person name="Goltsman E."/>
            <person name="Schmutz J."/>
            <person name="Larimer F."/>
            <person name="Land M."/>
            <person name="Hauser L."/>
            <person name="Mikhailova N."/>
            <person name="Li T."/>
            <person name="Overmann J."/>
            <person name="Bryant D.A."/>
            <person name="Richardson P."/>
        </authorList>
    </citation>
    <scope>NUCLEOTIDE SEQUENCE [LARGE SCALE GENOMIC DNA]</scope>
    <source>
        <strain>DSM 266 / SMG 266 / 2430</strain>
    </source>
</reference>